<reference key="1">
    <citation type="submission" date="2010-01" db="EMBL/GenBank/DDBJ databases">
        <title>Development of ovine expressed sequence tags for the study of female reproduction.</title>
        <authorList>
            <person name="Green J."/>
            <person name="Elsik C."/>
            <person name="Kiesler D."/>
            <person name="Prather R."/>
            <person name="Smith M."/>
            <person name="Springer G."/>
            <person name="Taylor J."/>
        </authorList>
    </citation>
    <scope>NUCLEOTIDE SEQUENCE [MRNA] OF 1-245</scope>
</reference>
<reference key="2">
    <citation type="submission" date="2004-06" db="EMBL/GenBank/DDBJ databases">
        <title>Extending the boundaries of the ovine callipyge imprinted gene cluster.</title>
        <authorList>
            <person name="Smit M.A."/>
            <person name="Davis E.E."/>
            <person name="Charlier C."/>
            <person name="Georges M."/>
            <person name="Cockett N.E."/>
        </authorList>
    </citation>
    <scope>NUCLEOTIDE SEQUENCE [GENOMIC DNA] OF 15-292</scope>
</reference>
<evidence type="ECO:0000250" key="1">
    <source>
        <dbReference type="UniProtKB" id="P55073"/>
    </source>
</evidence>
<evidence type="ECO:0000255" key="2"/>
<evidence type="ECO:0000305" key="3"/>
<dbReference type="EC" id="1.21.99.3" evidence="1"/>
<dbReference type="EMBL" id="GT879719">
    <property type="status" value="NOT_ANNOTATED_CDS"/>
    <property type="molecule type" value="mRNA"/>
</dbReference>
<dbReference type="EMBL" id="AY656759">
    <property type="protein sequence ID" value="AAT74923.1"/>
    <property type="molecule type" value="Genomic_DNA"/>
</dbReference>
<dbReference type="RefSeq" id="NP_001116122.1">
    <property type="nucleotide sequence ID" value="NM_001122650.1"/>
</dbReference>
<dbReference type="STRING" id="9940.ENSOARP00000014898"/>
<dbReference type="PaxDb" id="9940-ENSOARP00000014898"/>
<dbReference type="GeneID" id="100142657"/>
<dbReference type="KEGG" id="oas:100142657"/>
<dbReference type="CTD" id="1735"/>
<dbReference type="eggNOG" id="ENOG502S5FA">
    <property type="taxonomic scope" value="Eukaryota"/>
</dbReference>
<dbReference type="OrthoDB" id="428577at2759"/>
<dbReference type="Proteomes" id="UP000002356">
    <property type="component" value="Unplaced"/>
</dbReference>
<dbReference type="GO" id="GO:0010008">
    <property type="term" value="C:endosome membrane"/>
    <property type="evidence" value="ECO:0007669"/>
    <property type="project" value="UniProtKB-SubCell"/>
</dbReference>
<dbReference type="GO" id="GO:0005886">
    <property type="term" value="C:plasma membrane"/>
    <property type="evidence" value="ECO:0007669"/>
    <property type="project" value="UniProtKB-SubCell"/>
</dbReference>
<dbReference type="GO" id="GO:0004800">
    <property type="term" value="F:thyroxine 5'-deiodinase activity"/>
    <property type="evidence" value="ECO:0007669"/>
    <property type="project" value="InterPro"/>
</dbReference>
<dbReference type="GO" id="GO:0033798">
    <property type="term" value="F:thyroxine 5-deiodinase activity"/>
    <property type="evidence" value="ECO:0000250"/>
    <property type="project" value="UniProtKB"/>
</dbReference>
<dbReference type="GO" id="GO:0042446">
    <property type="term" value="P:hormone biosynthetic process"/>
    <property type="evidence" value="ECO:0007669"/>
    <property type="project" value="UniProtKB-KW"/>
</dbReference>
<dbReference type="GO" id="GO:0042404">
    <property type="term" value="P:thyroid hormone catabolic process"/>
    <property type="evidence" value="ECO:0000250"/>
    <property type="project" value="UniProtKB"/>
</dbReference>
<dbReference type="FunFam" id="3.40.30.10:FF:000239">
    <property type="entry name" value="Iodothyronine deiodinase"/>
    <property type="match status" value="1"/>
</dbReference>
<dbReference type="Gene3D" id="3.40.30.10">
    <property type="entry name" value="Glutaredoxin"/>
    <property type="match status" value="1"/>
</dbReference>
<dbReference type="InterPro" id="IPR000643">
    <property type="entry name" value="Iodothyronine_deiodinase"/>
</dbReference>
<dbReference type="InterPro" id="IPR008261">
    <property type="entry name" value="Iodothyronine_deiodinase_AS"/>
</dbReference>
<dbReference type="InterPro" id="IPR027252">
    <property type="entry name" value="Iodothyronine_deiodinase_I/III"/>
</dbReference>
<dbReference type="InterPro" id="IPR036249">
    <property type="entry name" value="Thioredoxin-like_sf"/>
</dbReference>
<dbReference type="PANTHER" id="PTHR11781">
    <property type="entry name" value="IODOTHYRONINE DEIODINASE"/>
    <property type="match status" value="1"/>
</dbReference>
<dbReference type="PANTHER" id="PTHR11781:SF4">
    <property type="entry name" value="THYROXINE 5-DEIODINASE"/>
    <property type="match status" value="1"/>
</dbReference>
<dbReference type="Pfam" id="PF00837">
    <property type="entry name" value="T4_deiodinase"/>
    <property type="match status" value="1"/>
</dbReference>
<dbReference type="PIRSF" id="PIRSF001330">
    <property type="entry name" value="IOD"/>
    <property type="match status" value="1"/>
</dbReference>
<dbReference type="PIRSF" id="PIRSF500144">
    <property type="entry name" value="IODI_III"/>
    <property type="match status" value="1"/>
</dbReference>
<dbReference type="SUPFAM" id="SSF52833">
    <property type="entry name" value="Thioredoxin-like"/>
    <property type="match status" value="1"/>
</dbReference>
<dbReference type="PROSITE" id="PS01205">
    <property type="entry name" value="T4_DEIODINASE"/>
    <property type="match status" value="1"/>
</dbReference>
<feature type="chain" id="PRO_0000223869" description="Thyroxine 5-deiodinase">
    <location>
        <begin position="1" status="less than"/>
        <end position="292"/>
    </location>
</feature>
<feature type="topological domain" description="Cytoplasmic" evidence="2">
    <location>
        <begin position="1" status="less than"/>
        <end position="30"/>
    </location>
</feature>
<feature type="transmembrane region" description="Helical; Signal-anchor for type II membrane protein" evidence="2">
    <location>
        <begin position="31"/>
        <end position="50"/>
    </location>
</feature>
<feature type="topological domain" description="Extracellular" evidence="2">
    <location>
        <begin position="51"/>
        <end position="292"/>
    </location>
</feature>
<feature type="active site" evidence="1">
    <location>
        <position position="158"/>
    </location>
</feature>
<feature type="non-standard amino acid" description="Selenocysteine" evidence="1">
    <location>
        <position position="158"/>
    </location>
</feature>
<feature type="non-terminal residue">
    <location>
        <position position="1"/>
    </location>
</feature>
<comment type="function">
    <text evidence="1">Plays a crucial role in the metabolism of thyroid hormones (TH) and has specific roles in TH activation and inactivation by deiodination (By similarity).Catalyzes the deiodination of L-thyroxine (T4) to 3,3',5'-triiodothyronine (rT3), 3,5,3'-triiodothyronine (T3) to 3,3'-diiodothyronine (3,3'-T2), 3,5-diiodothyronine (3,5-T2) to 3-monoiodothyronine (3-T1), rT3 to 3',5'-diiodothyronine (3',5'-T2) and 3,3'-T2 to 3'-monoiodothyronine (3'-T1) via inner-ring deiodination (IRD) (By similarity). Catalyzes the deiodination of 3-T1 to L-thyronine (T0) via outer-ring deiodination (ORD) (By similarity). Catalyzes the tyrosyl ring deiodinations of 3,3',5,5'-tetraiodothyronamine, 3,3',5'-triiodothyronamine, 3,5,3'-triiodothyronamine, 3,5-diiodothyronamine, 3,3'-diiodothyronamine and 3-iodothyronamine (By similarity).</text>
</comment>
<comment type="catalytic activity">
    <reaction evidence="1">
        <text>3,3',5'-triiodo-L-thyronine + iodide + A + H(+) = L-thyroxine + AH2</text>
        <dbReference type="Rhea" id="RHEA:18897"/>
        <dbReference type="ChEBI" id="CHEBI:13193"/>
        <dbReference type="ChEBI" id="CHEBI:15378"/>
        <dbReference type="ChEBI" id="CHEBI:16382"/>
        <dbReference type="ChEBI" id="CHEBI:17499"/>
        <dbReference type="ChEBI" id="CHEBI:57261"/>
        <dbReference type="ChEBI" id="CHEBI:58448"/>
        <dbReference type="EC" id="1.21.99.3"/>
    </reaction>
    <physiologicalReaction direction="right-to-left" evidence="1">
        <dbReference type="Rhea" id="RHEA:18899"/>
    </physiologicalReaction>
</comment>
<comment type="catalytic activity">
    <reaction evidence="1">
        <text>3,3'-diiodo-L-thyronine + iodide + A + H(+) = 3,3',5-triiodo-L-thyronine + AH2</text>
        <dbReference type="Rhea" id="RHEA:82571"/>
        <dbReference type="ChEBI" id="CHEBI:13193"/>
        <dbReference type="ChEBI" id="CHEBI:15378"/>
        <dbReference type="ChEBI" id="CHEBI:16382"/>
        <dbReference type="ChEBI" id="CHEBI:17499"/>
        <dbReference type="ChEBI" id="CHEBI:176514"/>
        <dbReference type="ChEBI" id="CHEBI:533015"/>
    </reaction>
    <physiologicalReaction direction="right-to-left" evidence="1">
        <dbReference type="Rhea" id="RHEA:82573"/>
    </physiologicalReaction>
</comment>
<comment type="catalytic activity">
    <reaction evidence="1">
        <text>3-iodo-L-thyronine + iodide + A + H(+) = 3,5-diiodo-L-thyronine + AH2</text>
        <dbReference type="Rhea" id="RHEA:82895"/>
        <dbReference type="ChEBI" id="CHEBI:13193"/>
        <dbReference type="ChEBI" id="CHEBI:15378"/>
        <dbReference type="ChEBI" id="CHEBI:16382"/>
        <dbReference type="ChEBI" id="CHEBI:17499"/>
        <dbReference type="ChEBI" id="CHEBI:232626"/>
        <dbReference type="ChEBI" id="CHEBI:232627"/>
    </reaction>
    <physiologicalReaction direction="right-to-left" evidence="1">
        <dbReference type="Rhea" id="RHEA:82897"/>
    </physiologicalReaction>
</comment>
<comment type="catalytic activity">
    <reaction evidence="1">
        <text>L-thyronine + iodide + A + H(+) = 3-iodo-L-thyronine + AH2</text>
        <dbReference type="Rhea" id="RHEA:83771"/>
        <dbReference type="ChEBI" id="CHEBI:13193"/>
        <dbReference type="ChEBI" id="CHEBI:15378"/>
        <dbReference type="ChEBI" id="CHEBI:16382"/>
        <dbReference type="ChEBI" id="CHEBI:17499"/>
        <dbReference type="ChEBI" id="CHEBI:232627"/>
        <dbReference type="ChEBI" id="CHEBI:233333"/>
    </reaction>
    <physiologicalReaction direction="right-to-left" evidence="1">
        <dbReference type="Rhea" id="RHEA:83773"/>
    </physiologicalReaction>
</comment>
<comment type="catalytic activity">
    <reaction evidence="1">
        <text>3',5'-diiodo-L-thyronine + iodide + A + H(+) = 3,3',5'-triiodo-L-thyronine + AH2</text>
        <dbReference type="Rhea" id="RHEA:83775"/>
        <dbReference type="ChEBI" id="CHEBI:13193"/>
        <dbReference type="ChEBI" id="CHEBI:15378"/>
        <dbReference type="ChEBI" id="CHEBI:16382"/>
        <dbReference type="ChEBI" id="CHEBI:17499"/>
        <dbReference type="ChEBI" id="CHEBI:57261"/>
        <dbReference type="ChEBI" id="CHEBI:195762"/>
    </reaction>
    <physiologicalReaction direction="right-to-left" evidence="1">
        <dbReference type="Rhea" id="RHEA:83777"/>
    </physiologicalReaction>
</comment>
<comment type="catalytic activity">
    <reaction evidence="1">
        <text>3'-iodo-L-thyronine + iodide + A + H(+) = 3,3'-diiodo-L-thyronine + AH2</text>
        <dbReference type="Rhea" id="RHEA:83779"/>
        <dbReference type="ChEBI" id="CHEBI:13193"/>
        <dbReference type="ChEBI" id="CHEBI:15378"/>
        <dbReference type="ChEBI" id="CHEBI:16382"/>
        <dbReference type="ChEBI" id="CHEBI:17499"/>
        <dbReference type="ChEBI" id="CHEBI:176514"/>
        <dbReference type="ChEBI" id="CHEBI:232695"/>
    </reaction>
    <physiologicalReaction direction="right-to-left" evidence="1">
        <dbReference type="Rhea" id="RHEA:83781"/>
    </physiologicalReaction>
</comment>
<comment type="catalytic activity">
    <reaction evidence="1">
        <text>3,3',5'-triiodothyronamine + iodide + A + H(+) = 3,3',5,5'-tetraiodothyronamine + AH2</text>
        <dbReference type="Rhea" id="RHEA:83807"/>
        <dbReference type="ChEBI" id="CHEBI:13193"/>
        <dbReference type="ChEBI" id="CHEBI:15378"/>
        <dbReference type="ChEBI" id="CHEBI:16382"/>
        <dbReference type="ChEBI" id="CHEBI:17499"/>
        <dbReference type="ChEBI" id="CHEBI:233343"/>
        <dbReference type="ChEBI" id="CHEBI:233344"/>
    </reaction>
    <physiologicalReaction direction="right-to-left" evidence="1">
        <dbReference type="Rhea" id="RHEA:83809"/>
    </physiologicalReaction>
</comment>
<comment type="catalytic activity">
    <reaction evidence="1">
        <text>3',5'-diiodothyronamine + iodide + A + H(+) = 3,3',5'-triiodothyronamine + AH2</text>
        <dbReference type="Rhea" id="RHEA:83799"/>
        <dbReference type="ChEBI" id="CHEBI:13193"/>
        <dbReference type="ChEBI" id="CHEBI:15378"/>
        <dbReference type="ChEBI" id="CHEBI:16382"/>
        <dbReference type="ChEBI" id="CHEBI:17499"/>
        <dbReference type="ChEBI" id="CHEBI:233342"/>
        <dbReference type="ChEBI" id="CHEBI:233343"/>
    </reaction>
    <physiologicalReaction direction="right-to-left" evidence="1">
        <dbReference type="Rhea" id="RHEA:83801"/>
    </physiologicalReaction>
</comment>
<comment type="catalytic activity">
    <reaction evidence="1">
        <text>3,3'-diiodothyronamine + iodide + A + H(+) = 3,3',5-triiodothyronamine + AH2</text>
        <dbReference type="Rhea" id="RHEA:83811"/>
        <dbReference type="ChEBI" id="CHEBI:13193"/>
        <dbReference type="ChEBI" id="CHEBI:15378"/>
        <dbReference type="ChEBI" id="CHEBI:16382"/>
        <dbReference type="ChEBI" id="CHEBI:17499"/>
        <dbReference type="ChEBI" id="CHEBI:233341"/>
        <dbReference type="ChEBI" id="CHEBI:233426"/>
    </reaction>
    <physiologicalReaction direction="right-to-left" evidence="1">
        <dbReference type="Rhea" id="RHEA:83813"/>
    </physiologicalReaction>
</comment>
<comment type="catalytic activity">
    <reaction evidence="1">
        <text>3-iodothyronamine + iodide + A + H(+) = 3,5-diiodothyronamine + AH2</text>
        <dbReference type="Rhea" id="RHEA:83823"/>
        <dbReference type="ChEBI" id="CHEBI:13193"/>
        <dbReference type="ChEBI" id="CHEBI:15378"/>
        <dbReference type="ChEBI" id="CHEBI:16382"/>
        <dbReference type="ChEBI" id="CHEBI:17499"/>
        <dbReference type="ChEBI" id="CHEBI:231647"/>
        <dbReference type="ChEBI" id="CHEBI:233340"/>
    </reaction>
    <physiologicalReaction direction="right-to-left" evidence="1">
        <dbReference type="Rhea" id="RHEA:83825"/>
    </physiologicalReaction>
</comment>
<comment type="catalytic activity">
    <reaction evidence="1">
        <text>3'-iodothyronamine + iodide + A + H(+) = 3,3'-diiodothyronamine + AH2</text>
        <dbReference type="Rhea" id="RHEA:83815"/>
        <dbReference type="ChEBI" id="CHEBI:13193"/>
        <dbReference type="ChEBI" id="CHEBI:15378"/>
        <dbReference type="ChEBI" id="CHEBI:16382"/>
        <dbReference type="ChEBI" id="CHEBI:17499"/>
        <dbReference type="ChEBI" id="CHEBI:233339"/>
        <dbReference type="ChEBI" id="CHEBI:233341"/>
    </reaction>
    <physiologicalReaction direction="right-to-left" evidence="1">
        <dbReference type="Rhea" id="RHEA:83817"/>
    </physiologicalReaction>
</comment>
<comment type="catalytic activity">
    <reaction evidence="1">
        <text>thyronamine + iodide + A + H(+) = 3-iodothyronamine + AH2</text>
        <dbReference type="Rhea" id="RHEA:83819"/>
        <dbReference type="ChEBI" id="CHEBI:13193"/>
        <dbReference type="ChEBI" id="CHEBI:15378"/>
        <dbReference type="ChEBI" id="CHEBI:16382"/>
        <dbReference type="ChEBI" id="CHEBI:17499"/>
        <dbReference type="ChEBI" id="CHEBI:231647"/>
        <dbReference type="ChEBI" id="CHEBI:233334"/>
    </reaction>
    <physiologicalReaction direction="right-to-left" evidence="1">
        <dbReference type="Rhea" id="RHEA:83821"/>
    </physiologicalReaction>
</comment>
<comment type="subunit">
    <text evidence="1">Monomer. Homodimer. May undergo minor heretodimerization with DIO1 and DIO2 (By similarity).</text>
</comment>
<comment type="subcellular location">
    <subcellularLocation>
        <location evidence="1">Cell membrane</location>
        <topology evidence="2">Single-pass type II membrane protein</topology>
    </subcellularLocation>
    <subcellularLocation>
        <location evidence="1">Endosome membrane</location>
        <topology evidence="2">Single-pass type II membrane protein</topology>
    </subcellularLocation>
</comment>
<comment type="similarity">
    <text evidence="3">Belongs to the iodothyronine deiodinase family.</text>
</comment>
<proteinExistence type="evidence at transcript level"/>
<organism>
    <name type="scientific">Ovis aries</name>
    <name type="common">Sheep</name>
    <dbReference type="NCBI Taxonomy" id="9940"/>
    <lineage>
        <taxon>Eukaryota</taxon>
        <taxon>Metazoa</taxon>
        <taxon>Chordata</taxon>
        <taxon>Craniata</taxon>
        <taxon>Vertebrata</taxon>
        <taxon>Euteleostomi</taxon>
        <taxon>Mammalia</taxon>
        <taxon>Eutheria</taxon>
        <taxon>Laurasiatheria</taxon>
        <taxon>Artiodactyla</taxon>
        <taxon>Ruminantia</taxon>
        <taxon>Pecora</taxon>
        <taxon>Bovidae</taxon>
        <taxon>Caprinae</taxon>
        <taxon>Ovis</taxon>
    </lineage>
</organism>
<name>IOD3_SHEEP</name>
<protein>
    <recommendedName>
        <fullName>Thyroxine 5-deiodinase</fullName>
        <ecNumber evidence="1">1.21.99.3</ecNumber>
    </recommendedName>
    <alternativeName>
        <fullName>5DIII</fullName>
    </alternativeName>
    <alternativeName>
        <fullName>DIOIII</fullName>
    </alternativeName>
    <alternativeName>
        <fullName>Type 3 DI</fullName>
    </alternativeName>
    <alternativeName>
        <fullName>Type III iodothyronine deiodinase</fullName>
    </alternativeName>
</protein>
<accession>Q6DN07</accession>
<gene>
    <name type="primary">DIO3</name>
</gene>
<keyword id="KW-1003">Cell membrane</keyword>
<keyword id="KW-0967">Endosome</keyword>
<keyword id="KW-0472">Membrane</keyword>
<keyword id="KW-0560">Oxidoreductase</keyword>
<keyword id="KW-1185">Reference proteome</keyword>
<keyword id="KW-0712">Selenocysteine</keyword>
<keyword id="KW-0735">Signal-anchor</keyword>
<keyword id="KW-0893">Thyroid hormones biosynthesis</keyword>
<keyword id="KW-0812">Transmembrane</keyword>
<keyword id="KW-1133">Transmembrane helix</keyword>
<sequence length="292" mass="32772">VVGEGRGALGGAATMLRSLLLHSLRLCAQTASCLVLFPRFLGTAFMLWLLDFLCIRKHLLGRRRRGQPEIEVELNSDGEEVPPDDPPVCVSDDNRLCTLASLRAVWHGQKLDFFKQAHEGGPAPNSEVVLPDGFQNQHILDYARGNRPLVLNFGSCTUPPFMARMSAFQRLVTKYQRDVDFLIIYIEEAHPSDGWVTTDSPYSIPQHRSLEDRVSAARVLQQGAPECALVLDTMTNSSSSAYGAYFERLYIIQSGTIMYQGGRGPDGYQVSELRTWLERYDEQLHGPQPRRV</sequence>